<reference key="1">
    <citation type="journal article" date="2002" name="Proc. Natl. Acad. Sci. U.S.A.">
        <title>Complete genome sequence and comparative genomic analysis of an emerging human pathogen, serotype V Streptococcus agalactiae.</title>
        <authorList>
            <person name="Tettelin H."/>
            <person name="Masignani V."/>
            <person name="Cieslewicz M.J."/>
            <person name="Eisen J.A."/>
            <person name="Peterson S.N."/>
            <person name="Wessels M.R."/>
            <person name="Paulsen I.T."/>
            <person name="Nelson K.E."/>
            <person name="Margarit I."/>
            <person name="Read T.D."/>
            <person name="Madoff L.C."/>
            <person name="Wolf A.M."/>
            <person name="Beanan M.J."/>
            <person name="Brinkac L.M."/>
            <person name="Daugherty S.C."/>
            <person name="DeBoy R.T."/>
            <person name="Durkin A.S."/>
            <person name="Kolonay J.F."/>
            <person name="Madupu R."/>
            <person name="Lewis M.R."/>
            <person name="Radune D."/>
            <person name="Fedorova N.B."/>
            <person name="Scanlan D."/>
            <person name="Khouri H.M."/>
            <person name="Mulligan S."/>
            <person name="Carty H.A."/>
            <person name="Cline R.T."/>
            <person name="Van Aken S.E."/>
            <person name="Gill J."/>
            <person name="Scarselli M."/>
            <person name="Mora M."/>
            <person name="Iacobini E.T."/>
            <person name="Brettoni C."/>
            <person name="Galli G."/>
            <person name="Mariani M."/>
            <person name="Vegni F."/>
            <person name="Maione D."/>
            <person name="Rinaudo D."/>
            <person name="Rappuoli R."/>
            <person name="Telford J.L."/>
            <person name="Kasper D.L."/>
            <person name="Grandi G."/>
            <person name="Fraser C.M."/>
        </authorList>
    </citation>
    <scope>NUCLEOTIDE SEQUENCE [LARGE SCALE GENOMIC DNA]</scope>
    <source>
        <strain>ATCC BAA-611 / 2603 V/R</strain>
    </source>
</reference>
<comment type="function">
    <text evidence="1">Catalyzes the reversible formation of acyl-phosphate (acyl-PO(4)) from acyl-[acyl-carrier-protein] (acyl-ACP). This enzyme utilizes acyl-ACP as fatty acyl donor, but not acyl-CoA.</text>
</comment>
<comment type="catalytic activity">
    <reaction evidence="1">
        <text>a fatty acyl-[ACP] + phosphate = an acyl phosphate + holo-[ACP]</text>
        <dbReference type="Rhea" id="RHEA:42292"/>
        <dbReference type="Rhea" id="RHEA-COMP:9685"/>
        <dbReference type="Rhea" id="RHEA-COMP:14125"/>
        <dbReference type="ChEBI" id="CHEBI:43474"/>
        <dbReference type="ChEBI" id="CHEBI:59918"/>
        <dbReference type="ChEBI" id="CHEBI:64479"/>
        <dbReference type="ChEBI" id="CHEBI:138651"/>
        <dbReference type="EC" id="2.3.1.274"/>
    </reaction>
</comment>
<comment type="pathway">
    <text evidence="1">Lipid metabolism; phospholipid metabolism.</text>
</comment>
<comment type="subunit">
    <text evidence="1">Homodimer. Probably interacts with PlsY.</text>
</comment>
<comment type="subcellular location">
    <subcellularLocation>
        <location evidence="1">Cytoplasm</location>
    </subcellularLocation>
    <text evidence="1">Associated with the membrane possibly through PlsY.</text>
</comment>
<comment type="similarity">
    <text evidence="1">Belongs to the PlsX family.</text>
</comment>
<dbReference type="EC" id="2.3.1.274" evidence="1"/>
<dbReference type="EMBL" id="AE009948">
    <property type="protein sequence ID" value="AAM98930.1"/>
    <property type="molecule type" value="Genomic_DNA"/>
</dbReference>
<dbReference type="RefSeq" id="NP_687058.1">
    <property type="nucleotide sequence ID" value="NC_004116.1"/>
</dbReference>
<dbReference type="RefSeq" id="WP_000716823.1">
    <property type="nucleotide sequence ID" value="NC_004116.1"/>
</dbReference>
<dbReference type="SMR" id="P65741"/>
<dbReference type="STRING" id="208435.SAG0022"/>
<dbReference type="KEGG" id="sag:SAG0022"/>
<dbReference type="PATRIC" id="fig|208435.3.peg.21"/>
<dbReference type="HOGENOM" id="CLU_039379_1_1_9"/>
<dbReference type="OrthoDB" id="9806408at2"/>
<dbReference type="UniPathway" id="UPA00085"/>
<dbReference type="Proteomes" id="UP000000821">
    <property type="component" value="Chromosome"/>
</dbReference>
<dbReference type="GO" id="GO:0005737">
    <property type="term" value="C:cytoplasm"/>
    <property type="evidence" value="ECO:0007669"/>
    <property type="project" value="UniProtKB-SubCell"/>
</dbReference>
<dbReference type="GO" id="GO:0043811">
    <property type="term" value="F:phosphate:acyl-[acyl carrier protein] acyltransferase activity"/>
    <property type="evidence" value="ECO:0007669"/>
    <property type="project" value="UniProtKB-UniRule"/>
</dbReference>
<dbReference type="GO" id="GO:0006633">
    <property type="term" value="P:fatty acid biosynthetic process"/>
    <property type="evidence" value="ECO:0007669"/>
    <property type="project" value="UniProtKB-UniRule"/>
</dbReference>
<dbReference type="GO" id="GO:0008654">
    <property type="term" value="P:phospholipid biosynthetic process"/>
    <property type="evidence" value="ECO:0007669"/>
    <property type="project" value="UniProtKB-KW"/>
</dbReference>
<dbReference type="Gene3D" id="3.40.718.10">
    <property type="entry name" value="Isopropylmalate Dehydrogenase"/>
    <property type="match status" value="1"/>
</dbReference>
<dbReference type="HAMAP" id="MF_00019">
    <property type="entry name" value="PlsX"/>
    <property type="match status" value="1"/>
</dbReference>
<dbReference type="InterPro" id="IPR003664">
    <property type="entry name" value="FA_synthesis"/>
</dbReference>
<dbReference type="InterPro" id="IPR012281">
    <property type="entry name" value="Phospholipid_synth_PlsX-like"/>
</dbReference>
<dbReference type="NCBIfam" id="TIGR00182">
    <property type="entry name" value="plsX"/>
    <property type="match status" value="1"/>
</dbReference>
<dbReference type="PANTHER" id="PTHR30100">
    <property type="entry name" value="FATTY ACID/PHOSPHOLIPID SYNTHESIS PROTEIN PLSX"/>
    <property type="match status" value="1"/>
</dbReference>
<dbReference type="PANTHER" id="PTHR30100:SF1">
    <property type="entry name" value="PHOSPHATE ACYLTRANSFERASE"/>
    <property type="match status" value="1"/>
</dbReference>
<dbReference type="Pfam" id="PF02504">
    <property type="entry name" value="FA_synthesis"/>
    <property type="match status" value="1"/>
</dbReference>
<dbReference type="PIRSF" id="PIRSF002465">
    <property type="entry name" value="Phsphlp_syn_PlsX"/>
    <property type="match status" value="1"/>
</dbReference>
<dbReference type="SUPFAM" id="SSF53659">
    <property type="entry name" value="Isocitrate/Isopropylmalate dehydrogenase-like"/>
    <property type="match status" value="1"/>
</dbReference>
<accession>P65741</accession>
<accession>Q8E2G6</accession>
<accession>Q8E7X4</accession>
<keyword id="KW-0963">Cytoplasm</keyword>
<keyword id="KW-0444">Lipid biosynthesis</keyword>
<keyword id="KW-0443">Lipid metabolism</keyword>
<keyword id="KW-0594">Phospholipid biosynthesis</keyword>
<keyword id="KW-1208">Phospholipid metabolism</keyword>
<keyword id="KW-1185">Reference proteome</keyword>
<keyword id="KW-0808">Transferase</keyword>
<gene>
    <name evidence="1" type="primary">plsX</name>
    <name type="ordered locus">SAG0022</name>
</gene>
<proteinExistence type="inferred from homology"/>
<sequence>MKKIAIDAMGGDYAPKAIVEGVNQAISDFSDIEVQLYGDQKKIEKYLTVTERVSIIHTEEKINSDDEPAKAVRRKKQSSMVLGAKAVKDGVAQAFISAGNTGALLAAGLFVVGRIKGVDRPGLMSTMPTLDGVGFDMLDLGANAENTASHLHQYAILGSFYAKNVRGIEVPRVGLLNNGTEETKGDSLHKEAYELLAAEPSINFIGNIEARDLMSSVADVVVTDGFTGNAVLKTMEGTAMSIMGSLKSSIKSGGVKAKLGALLLKDSLYQLKDSMDYSSAGGAVLFGLKAPIVKCHGSSDSKAVYSTLKQVRTMLETQVVDQLVDAFTDE</sequence>
<organism>
    <name type="scientific">Streptococcus agalactiae serotype V (strain ATCC BAA-611 / 2603 V/R)</name>
    <dbReference type="NCBI Taxonomy" id="208435"/>
    <lineage>
        <taxon>Bacteria</taxon>
        <taxon>Bacillati</taxon>
        <taxon>Bacillota</taxon>
        <taxon>Bacilli</taxon>
        <taxon>Lactobacillales</taxon>
        <taxon>Streptococcaceae</taxon>
        <taxon>Streptococcus</taxon>
    </lineage>
</organism>
<name>PLSX_STRA5</name>
<feature type="chain" id="PRO_0000189944" description="Phosphate acyltransferase">
    <location>
        <begin position="1"/>
        <end position="330"/>
    </location>
</feature>
<evidence type="ECO:0000255" key="1">
    <source>
        <dbReference type="HAMAP-Rule" id="MF_00019"/>
    </source>
</evidence>
<protein>
    <recommendedName>
        <fullName evidence="1">Phosphate acyltransferase</fullName>
        <ecNumber evidence="1">2.3.1.274</ecNumber>
    </recommendedName>
    <alternativeName>
        <fullName evidence="1">Acyl-ACP phosphotransacylase</fullName>
    </alternativeName>
    <alternativeName>
        <fullName evidence="1">Acyl-[acyl-carrier-protein]--phosphate acyltransferase</fullName>
    </alternativeName>
    <alternativeName>
        <fullName evidence="1">Phosphate-acyl-ACP acyltransferase</fullName>
    </alternativeName>
</protein>